<dbReference type="EMBL" id="CP000853">
    <property type="protein sequence ID" value="ABW18068.1"/>
    <property type="molecule type" value="Genomic_DNA"/>
</dbReference>
<dbReference type="RefSeq" id="WP_012158382.1">
    <property type="nucleotide sequence ID" value="NC_009922.1"/>
</dbReference>
<dbReference type="SMR" id="A8MLF4"/>
<dbReference type="STRING" id="350688.Clos_0506"/>
<dbReference type="KEGG" id="aoe:Clos_0506"/>
<dbReference type="eggNOG" id="COG0096">
    <property type="taxonomic scope" value="Bacteria"/>
</dbReference>
<dbReference type="HOGENOM" id="CLU_098428_0_2_9"/>
<dbReference type="OrthoDB" id="9802617at2"/>
<dbReference type="Proteomes" id="UP000000269">
    <property type="component" value="Chromosome"/>
</dbReference>
<dbReference type="GO" id="GO:1990904">
    <property type="term" value="C:ribonucleoprotein complex"/>
    <property type="evidence" value="ECO:0007669"/>
    <property type="project" value="UniProtKB-KW"/>
</dbReference>
<dbReference type="GO" id="GO:0005840">
    <property type="term" value="C:ribosome"/>
    <property type="evidence" value="ECO:0007669"/>
    <property type="project" value="UniProtKB-KW"/>
</dbReference>
<dbReference type="GO" id="GO:0019843">
    <property type="term" value="F:rRNA binding"/>
    <property type="evidence" value="ECO:0007669"/>
    <property type="project" value="UniProtKB-UniRule"/>
</dbReference>
<dbReference type="GO" id="GO:0003735">
    <property type="term" value="F:structural constituent of ribosome"/>
    <property type="evidence" value="ECO:0007669"/>
    <property type="project" value="InterPro"/>
</dbReference>
<dbReference type="GO" id="GO:0006412">
    <property type="term" value="P:translation"/>
    <property type="evidence" value="ECO:0007669"/>
    <property type="project" value="UniProtKB-UniRule"/>
</dbReference>
<dbReference type="FunFam" id="3.30.1370.30:FF:000002">
    <property type="entry name" value="30S ribosomal protein S8"/>
    <property type="match status" value="1"/>
</dbReference>
<dbReference type="FunFam" id="3.30.1490.10:FF:000001">
    <property type="entry name" value="30S ribosomal protein S8"/>
    <property type="match status" value="1"/>
</dbReference>
<dbReference type="Gene3D" id="3.30.1370.30">
    <property type="match status" value="1"/>
</dbReference>
<dbReference type="Gene3D" id="3.30.1490.10">
    <property type="match status" value="1"/>
</dbReference>
<dbReference type="HAMAP" id="MF_01302_B">
    <property type="entry name" value="Ribosomal_uS8_B"/>
    <property type="match status" value="1"/>
</dbReference>
<dbReference type="InterPro" id="IPR000630">
    <property type="entry name" value="Ribosomal_uS8"/>
</dbReference>
<dbReference type="InterPro" id="IPR047863">
    <property type="entry name" value="Ribosomal_uS8_CS"/>
</dbReference>
<dbReference type="InterPro" id="IPR035987">
    <property type="entry name" value="Ribosomal_uS8_sf"/>
</dbReference>
<dbReference type="NCBIfam" id="NF001109">
    <property type="entry name" value="PRK00136.1"/>
    <property type="match status" value="1"/>
</dbReference>
<dbReference type="PANTHER" id="PTHR11758">
    <property type="entry name" value="40S RIBOSOMAL PROTEIN S15A"/>
    <property type="match status" value="1"/>
</dbReference>
<dbReference type="Pfam" id="PF00410">
    <property type="entry name" value="Ribosomal_S8"/>
    <property type="match status" value="1"/>
</dbReference>
<dbReference type="SUPFAM" id="SSF56047">
    <property type="entry name" value="Ribosomal protein S8"/>
    <property type="match status" value="1"/>
</dbReference>
<dbReference type="PROSITE" id="PS00053">
    <property type="entry name" value="RIBOSOMAL_S8"/>
    <property type="match status" value="1"/>
</dbReference>
<protein>
    <recommendedName>
        <fullName evidence="1">Small ribosomal subunit protein uS8</fullName>
    </recommendedName>
    <alternativeName>
        <fullName evidence="2">30S ribosomal protein S8</fullName>
    </alternativeName>
</protein>
<gene>
    <name evidence="1" type="primary">rpsH</name>
    <name type="ordered locus">Clos_0506</name>
</gene>
<organism>
    <name type="scientific">Alkaliphilus oremlandii (strain OhILAs)</name>
    <name type="common">Clostridium oremlandii (strain OhILAs)</name>
    <dbReference type="NCBI Taxonomy" id="350688"/>
    <lineage>
        <taxon>Bacteria</taxon>
        <taxon>Bacillati</taxon>
        <taxon>Bacillota</taxon>
        <taxon>Clostridia</taxon>
        <taxon>Peptostreptococcales</taxon>
        <taxon>Natronincolaceae</taxon>
        <taxon>Alkaliphilus</taxon>
    </lineage>
</organism>
<keyword id="KW-1185">Reference proteome</keyword>
<keyword id="KW-0687">Ribonucleoprotein</keyword>
<keyword id="KW-0689">Ribosomal protein</keyword>
<keyword id="KW-0694">RNA-binding</keyword>
<keyword id="KW-0699">rRNA-binding</keyword>
<feature type="chain" id="PRO_1000067482" description="Small ribosomal subunit protein uS8">
    <location>
        <begin position="1"/>
        <end position="132"/>
    </location>
</feature>
<accession>A8MLF4</accession>
<proteinExistence type="inferred from homology"/>
<evidence type="ECO:0000255" key="1">
    <source>
        <dbReference type="HAMAP-Rule" id="MF_01302"/>
    </source>
</evidence>
<evidence type="ECO:0000305" key="2"/>
<sequence>MTMTDPIADMLTRIRNGNMAKHETIDIPASNMKKEIANILLEEGFIKGFDVIEDGKQGIIRMQLKYGKNKEKVITGIKKISKPGLRVYAKKDEIPRVLGGLGIAIISTSRGIITDKVARKEGVGGEVIAYIW</sequence>
<reference key="1">
    <citation type="submission" date="2007-10" db="EMBL/GenBank/DDBJ databases">
        <title>Complete genome of Alkaliphilus oremlandii OhILAs.</title>
        <authorList>
            <person name="Copeland A."/>
            <person name="Lucas S."/>
            <person name="Lapidus A."/>
            <person name="Barry K."/>
            <person name="Detter J.C."/>
            <person name="Glavina del Rio T."/>
            <person name="Hammon N."/>
            <person name="Israni S."/>
            <person name="Dalin E."/>
            <person name="Tice H."/>
            <person name="Pitluck S."/>
            <person name="Chain P."/>
            <person name="Malfatti S."/>
            <person name="Shin M."/>
            <person name="Vergez L."/>
            <person name="Schmutz J."/>
            <person name="Larimer F."/>
            <person name="Land M."/>
            <person name="Hauser L."/>
            <person name="Kyrpides N."/>
            <person name="Mikhailova N."/>
            <person name="Stolz J.F."/>
            <person name="Dawson A."/>
            <person name="Fisher E."/>
            <person name="Crable B."/>
            <person name="Perera E."/>
            <person name="Lisak J."/>
            <person name="Ranganathan M."/>
            <person name="Basu P."/>
            <person name="Richardson P."/>
        </authorList>
    </citation>
    <scope>NUCLEOTIDE SEQUENCE [LARGE SCALE GENOMIC DNA]</scope>
    <source>
        <strain>OhILAs</strain>
    </source>
</reference>
<name>RS8_ALKOO</name>
<comment type="function">
    <text evidence="1">One of the primary rRNA binding proteins, it binds directly to 16S rRNA central domain where it helps coordinate assembly of the platform of the 30S subunit.</text>
</comment>
<comment type="subunit">
    <text evidence="1">Part of the 30S ribosomal subunit. Contacts proteins S5 and S12.</text>
</comment>
<comment type="similarity">
    <text evidence="1">Belongs to the universal ribosomal protein uS8 family.</text>
</comment>